<accession>P63679</accession>
<accession>Q99SF5</accession>
<reference key="1">
    <citation type="journal article" date="2001" name="Lancet">
        <title>Whole genome sequencing of meticillin-resistant Staphylococcus aureus.</title>
        <authorList>
            <person name="Kuroda M."/>
            <person name="Ohta T."/>
            <person name="Uchiyama I."/>
            <person name="Baba T."/>
            <person name="Yuzawa H."/>
            <person name="Kobayashi I."/>
            <person name="Cui L."/>
            <person name="Oguchi A."/>
            <person name="Aoki K."/>
            <person name="Nagai Y."/>
            <person name="Lian J.-Q."/>
            <person name="Ito T."/>
            <person name="Kanamori M."/>
            <person name="Matsumaru H."/>
            <person name="Maruyama A."/>
            <person name="Murakami H."/>
            <person name="Hosoyama A."/>
            <person name="Mizutani-Ui Y."/>
            <person name="Takahashi N.K."/>
            <person name="Sawano T."/>
            <person name="Inoue R."/>
            <person name="Kaito C."/>
            <person name="Sekimizu K."/>
            <person name="Hirakawa H."/>
            <person name="Kuhara S."/>
            <person name="Goto S."/>
            <person name="Yabuzaki J."/>
            <person name="Kanehisa M."/>
            <person name="Yamashita A."/>
            <person name="Oshima K."/>
            <person name="Furuya K."/>
            <person name="Yoshino C."/>
            <person name="Shiba T."/>
            <person name="Hattori M."/>
            <person name="Ogasawara N."/>
            <person name="Hayashi H."/>
            <person name="Hiramatsu K."/>
        </authorList>
    </citation>
    <scope>NUCLEOTIDE SEQUENCE [LARGE SCALE GENOMIC DNA]</scope>
    <source>
        <strain>Mu50 / ATCC 700699</strain>
    </source>
</reference>
<organism>
    <name type="scientific">Staphylococcus aureus (strain Mu50 / ATCC 700699)</name>
    <dbReference type="NCBI Taxonomy" id="158878"/>
    <lineage>
        <taxon>Bacteria</taxon>
        <taxon>Bacillati</taxon>
        <taxon>Bacillota</taxon>
        <taxon>Bacilli</taxon>
        <taxon>Bacillales</taxon>
        <taxon>Staphylococcaceae</taxon>
        <taxon>Staphylococcus</taxon>
    </lineage>
</organism>
<gene>
    <name evidence="1" type="primary">atpD</name>
    <name type="ordered locus">SAV2103</name>
</gene>
<sequence>MGIGRVTQVMGPVIDVRFEHNEVPKINNALVIDVPKEEGTIQLTLEVALQLGDDVVRTIAMDSTDGVQRGMDVKDTGKEISVPVGDETLGRVFNVLGETIDLKEEISDSVRRDPIHRQAPAFDELSTEVQILETGIKVVDLLAPYIKGGKIGLFGGAGVGKTVLIQELINNIAQEHGGISVFAGVGERTREGNDLYFEMSDSGVIKKTAMVFGQMNEPPGARMRVALSGLTMAEYFRDEQGQDVLLFIDNIFRFTQAGSEVSALLGRMPSAVGYQPTLATEMGQLQERITSTTKGSVTSIQAVFVPADDYTDPAPATAFAHLDATTNLERKLTEMGIYPAVDPLASTSRALEPSIVGQEHYEVARDVQSTLQKYRELQDIIAILGMDELSDEDKQTVERARRIQFFLSQNFHVAEQFTGQKGSYVPVKTTVANFKDILDGKYDHIPEDAFRLVGSMDDVIAKAKDMGVEV</sequence>
<proteinExistence type="inferred from homology"/>
<dbReference type="EC" id="7.1.2.2" evidence="1"/>
<dbReference type="EMBL" id="BA000017">
    <property type="protein sequence ID" value="BAB58265.1"/>
    <property type="molecule type" value="Genomic_DNA"/>
</dbReference>
<dbReference type="RefSeq" id="WP_000511135.1">
    <property type="nucleotide sequence ID" value="NC_002758.2"/>
</dbReference>
<dbReference type="SMR" id="P63679"/>
<dbReference type="GeneID" id="98346410"/>
<dbReference type="KEGG" id="sav:SAV2103"/>
<dbReference type="HOGENOM" id="CLU_022398_0_2_9"/>
<dbReference type="PhylomeDB" id="P63679"/>
<dbReference type="Proteomes" id="UP000002481">
    <property type="component" value="Chromosome"/>
</dbReference>
<dbReference type="GO" id="GO:0005886">
    <property type="term" value="C:plasma membrane"/>
    <property type="evidence" value="ECO:0007669"/>
    <property type="project" value="UniProtKB-SubCell"/>
</dbReference>
<dbReference type="GO" id="GO:0045259">
    <property type="term" value="C:proton-transporting ATP synthase complex"/>
    <property type="evidence" value="ECO:0007669"/>
    <property type="project" value="UniProtKB-KW"/>
</dbReference>
<dbReference type="GO" id="GO:0005524">
    <property type="term" value="F:ATP binding"/>
    <property type="evidence" value="ECO:0007669"/>
    <property type="project" value="UniProtKB-UniRule"/>
</dbReference>
<dbReference type="GO" id="GO:0016887">
    <property type="term" value="F:ATP hydrolysis activity"/>
    <property type="evidence" value="ECO:0007669"/>
    <property type="project" value="InterPro"/>
</dbReference>
<dbReference type="GO" id="GO:0046933">
    <property type="term" value="F:proton-transporting ATP synthase activity, rotational mechanism"/>
    <property type="evidence" value="ECO:0007669"/>
    <property type="project" value="UniProtKB-UniRule"/>
</dbReference>
<dbReference type="CDD" id="cd18110">
    <property type="entry name" value="ATP-synt_F1_beta_C"/>
    <property type="match status" value="1"/>
</dbReference>
<dbReference type="CDD" id="cd18115">
    <property type="entry name" value="ATP-synt_F1_beta_N"/>
    <property type="match status" value="1"/>
</dbReference>
<dbReference type="CDD" id="cd01133">
    <property type="entry name" value="F1-ATPase_beta_CD"/>
    <property type="match status" value="1"/>
</dbReference>
<dbReference type="FunFam" id="1.10.1140.10:FF:000001">
    <property type="entry name" value="ATP synthase subunit beta"/>
    <property type="match status" value="1"/>
</dbReference>
<dbReference type="FunFam" id="2.40.10.170:FF:000005">
    <property type="entry name" value="ATP synthase subunit beta"/>
    <property type="match status" value="1"/>
</dbReference>
<dbReference type="FunFam" id="3.40.50.300:FF:000004">
    <property type="entry name" value="ATP synthase subunit beta"/>
    <property type="match status" value="1"/>
</dbReference>
<dbReference type="Gene3D" id="2.40.10.170">
    <property type="match status" value="1"/>
</dbReference>
<dbReference type="Gene3D" id="1.10.1140.10">
    <property type="entry name" value="Bovine Mitochondrial F1-atpase, Atp Synthase Beta Chain, Chain D, domain 3"/>
    <property type="match status" value="1"/>
</dbReference>
<dbReference type="Gene3D" id="3.40.50.300">
    <property type="entry name" value="P-loop containing nucleotide triphosphate hydrolases"/>
    <property type="match status" value="1"/>
</dbReference>
<dbReference type="HAMAP" id="MF_01347">
    <property type="entry name" value="ATP_synth_beta_bact"/>
    <property type="match status" value="1"/>
</dbReference>
<dbReference type="InterPro" id="IPR003593">
    <property type="entry name" value="AAA+_ATPase"/>
</dbReference>
<dbReference type="InterPro" id="IPR055190">
    <property type="entry name" value="ATP-synt_VA_C"/>
</dbReference>
<dbReference type="InterPro" id="IPR005722">
    <property type="entry name" value="ATP_synth_F1_bsu"/>
</dbReference>
<dbReference type="InterPro" id="IPR020003">
    <property type="entry name" value="ATPase_a/bsu_AS"/>
</dbReference>
<dbReference type="InterPro" id="IPR050053">
    <property type="entry name" value="ATPase_alpha/beta_chains"/>
</dbReference>
<dbReference type="InterPro" id="IPR004100">
    <property type="entry name" value="ATPase_F1/V1/A1_a/bsu_N"/>
</dbReference>
<dbReference type="InterPro" id="IPR036121">
    <property type="entry name" value="ATPase_F1/V1/A1_a/bsu_N_sf"/>
</dbReference>
<dbReference type="InterPro" id="IPR000194">
    <property type="entry name" value="ATPase_F1/V1/A1_a/bsu_nucl-bd"/>
</dbReference>
<dbReference type="InterPro" id="IPR024034">
    <property type="entry name" value="ATPase_F1/V1_b/a_C"/>
</dbReference>
<dbReference type="InterPro" id="IPR027417">
    <property type="entry name" value="P-loop_NTPase"/>
</dbReference>
<dbReference type="NCBIfam" id="TIGR01039">
    <property type="entry name" value="atpD"/>
    <property type="match status" value="1"/>
</dbReference>
<dbReference type="PANTHER" id="PTHR15184">
    <property type="entry name" value="ATP SYNTHASE"/>
    <property type="match status" value="1"/>
</dbReference>
<dbReference type="PANTHER" id="PTHR15184:SF71">
    <property type="entry name" value="ATP SYNTHASE SUBUNIT BETA, MITOCHONDRIAL"/>
    <property type="match status" value="1"/>
</dbReference>
<dbReference type="Pfam" id="PF00006">
    <property type="entry name" value="ATP-synt_ab"/>
    <property type="match status" value="1"/>
</dbReference>
<dbReference type="Pfam" id="PF02874">
    <property type="entry name" value="ATP-synt_ab_N"/>
    <property type="match status" value="1"/>
</dbReference>
<dbReference type="Pfam" id="PF22919">
    <property type="entry name" value="ATP-synt_VA_C"/>
    <property type="match status" value="1"/>
</dbReference>
<dbReference type="SMART" id="SM00382">
    <property type="entry name" value="AAA"/>
    <property type="match status" value="1"/>
</dbReference>
<dbReference type="SUPFAM" id="SSF47917">
    <property type="entry name" value="C-terminal domain of alpha and beta subunits of F1 ATP synthase"/>
    <property type="match status" value="1"/>
</dbReference>
<dbReference type="SUPFAM" id="SSF50615">
    <property type="entry name" value="N-terminal domain of alpha and beta subunits of F1 ATP synthase"/>
    <property type="match status" value="1"/>
</dbReference>
<dbReference type="SUPFAM" id="SSF52540">
    <property type="entry name" value="P-loop containing nucleoside triphosphate hydrolases"/>
    <property type="match status" value="1"/>
</dbReference>
<dbReference type="PROSITE" id="PS00152">
    <property type="entry name" value="ATPASE_ALPHA_BETA"/>
    <property type="match status" value="1"/>
</dbReference>
<comment type="function">
    <text evidence="1">Produces ATP from ADP in the presence of a proton gradient across the membrane. The catalytic sites are hosted primarily by the beta subunits.</text>
</comment>
<comment type="catalytic activity">
    <reaction evidence="1">
        <text>ATP + H2O + 4 H(+)(in) = ADP + phosphate + 5 H(+)(out)</text>
        <dbReference type="Rhea" id="RHEA:57720"/>
        <dbReference type="ChEBI" id="CHEBI:15377"/>
        <dbReference type="ChEBI" id="CHEBI:15378"/>
        <dbReference type="ChEBI" id="CHEBI:30616"/>
        <dbReference type="ChEBI" id="CHEBI:43474"/>
        <dbReference type="ChEBI" id="CHEBI:456216"/>
        <dbReference type="EC" id="7.1.2.2"/>
    </reaction>
</comment>
<comment type="subunit">
    <text evidence="1">F-type ATPases have 2 components, CF(1) - the catalytic core - and CF(0) - the membrane proton channel. CF(1) has five subunits: alpha(3), beta(3), gamma(1), delta(1), epsilon(1). CF(0) has three main subunits: a(1), b(2) and c(9-12). The alpha and beta chains form an alternating ring which encloses part of the gamma chain. CF(1) is attached to CF(0) by a central stalk formed by the gamma and epsilon chains, while a peripheral stalk is formed by the delta and b chains.</text>
</comment>
<comment type="subcellular location">
    <subcellularLocation>
        <location evidence="1">Cell membrane</location>
        <topology evidence="1">Peripheral membrane protein</topology>
    </subcellularLocation>
</comment>
<comment type="similarity">
    <text evidence="1">Belongs to the ATPase alpha/beta chains family.</text>
</comment>
<keyword id="KW-0066">ATP synthesis</keyword>
<keyword id="KW-0067">ATP-binding</keyword>
<keyword id="KW-1003">Cell membrane</keyword>
<keyword id="KW-0139">CF(1)</keyword>
<keyword id="KW-0375">Hydrogen ion transport</keyword>
<keyword id="KW-0406">Ion transport</keyword>
<keyword id="KW-0472">Membrane</keyword>
<keyword id="KW-0547">Nucleotide-binding</keyword>
<keyword id="KW-1278">Translocase</keyword>
<keyword id="KW-0813">Transport</keyword>
<feature type="chain" id="PRO_0000144469" description="ATP synthase subunit beta">
    <location>
        <begin position="1"/>
        <end position="470"/>
    </location>
</feature>
<feature type="binding site" evidence="1">
    <location>
        <begin position="155"/>
        <end position="162"/>
    </location>
    <ligand>
        <name>ATP</name>
        <dbReference type="ChEBI" id="CHEBI:30616"/>
    </ligand>
</feature>
<protein>
    <recommendedName>
        <fullName evidence="1">ATP synthase subunit beta</fullName>
        <ecNumber evidence="1">7.1.2.2</ecNumber>
    </recommendedName>
    <alternativeName>
        <fullName evidence="1">ATP synthase F1 sector subunit beta</fullName>
    </alternativeName>
    <alternativeName>
        <fullName evidence="1">F-ATPase subunit beta</fullName>
    </alternativeName>
</protein>
<name>ATPB_STAAM</name>
<evidence type="ECO:0000255" key="1">
    <source>
        <dbReference type="HAMAP-Rule" id="MF_01347"/>
    </source>
</evidence>